<comment type="function">
    <text evidence="1">Catalyzes the oxidation of 5,10-methylenetetrahydrofolate to 5,10-methenyltetrahydrofolate and then the hydrolysis of 5,10-methenyltetrahydrofolate to 10-formyltetrahydrofolate.</text>
</comment>
<comment type="catalytic activity">
    <reaction evidence="1">
        <text>(6R)-5,10-methylene-5,6,7,8-tetrahydrofolate + NADP(+) = (6R)-5,10-methenyltetrahydrofolate + NADPH</text>
        <dbReference type="Rhea" id="RHEA:22812"/>
        <dbReference type="ChEBI" id="CHEBI:15636"/>
        <dbReference type="ChEBI" id="CHEBI:57455"/>
        <dbReference type="ChEBI" id="CHEBI:57783"/>
        <dbReference type="ChEBI" id="CHEBI:58349"/>
        <dbReference type="EC" id="1.5.1.5"/>
    </reaction>
</comment>
<comment type="catalytic activity">
    <reaction evidence="1">
        <text>(6R)-5,10-methenyltetrahydrofolate + H2O = (6R)-10-formyltetrahydrofolate + H(+)</text>
        <dbReference type="Rhea" id="RHEA:23700"/>
        <dbReference type="ChEBI" id="CHEBI:15377"/>
        <dbReference type="ChEBI" id="CHEBI:15378"/>
        <dbReference type="ChEBI" id="CHEBI:57455"/>
        <dbReference type="ChEBI" id="CHEBI:195366"/>
        <dbReference type="EC" id="3.5.4.9"/>
    </reaction>
</comment>
<comment type="pathway">
    <text evidence="1">One-carbon metabolism; tetrahydrofolate interconversion.</text>
</comment>
<comment type="subunit">
    <text evidence="1">Homodimer.</text>
</comment>
<comment type="similarity">
    <text evidence="1">Belongs to the tetrahydrofolate dehydrogenase/cyclohydrolase family.</text>
</comment>
<evidence type="ECO:0000255" key="1">
    <source>
        <dbReference type="HAMAP-Rule" id="MF_01576"/>
    </source>
</evidence>
<proteinExistence type="inferred from homology"/>
<organism>
    <name type="scientific">Mycobacterium marinum (strain ATCC BAA-535 / M)</name>
    <dbReference type="NCBI Taxonomy" id="216594"/>
    <lineage>
        <taxon>Bacteria</taxon>
        <taxon>Bacillati</taxon>
        <taxon>Actinomycetota</taxon>
        <taxon>Actinomycetes</taxon>
        <taxon>Mycobacteriales</taxon>
        <taxon>Mycobacteriaceae</taxon>
        <taxon>Mycobacterium</taxon>
        <taxon>Mycobacterium ulcerans group</taxon>
    </lineage>
</organism>
<name>FOLD_MYCMM</name>
<dbReference type="EC" id="1.5.1.5" evidence="1"/>
<dbReference type="EC" id="3.5.4.9" evidence="1"/>
<dbReference type="EMBL" id="CP000854">
    <property type="protein sequence ID" value="ACC39634.1"/>
    <property type="molecule type" value="Genomic_DNA"/>
</dbReference>
<dbReference type="RefSeq" id="WP_012393057.1">
    <property type="nucleotide sequence ID" value="NC_010612.1"/>
</dbReference>
<dbReference type="SMR" id="B2HDR8"/>
<dbReference type="STRING" id="216594.MMAR_1176"/>
<dbReference type="GeneID" id="34343317"/>
<dbReference type="KEGG" id="mmi:MMAR_1176"/>
<dbReference type="eggNOG" id="COG0190">
    <property type="taxonomic scope" value="Bacteria"/>
</dbReference>
<dbReference type="HOGENOM" id="CLU_034045_2_1_11"/>
<dbReference type="OrthoDB" id="9803580at2"/>
<dbReference type="UniPathway" id="UPA00193"/>
<dbReference type="Proteomes" id="UP000001190">
    <property type="component" value="Chromosome"/>
</dbReference>
<dbReference type="GO" id="GO:0005829">
    <property type="term" value="C:cytosol"/>
    <property type="evidence" value="ECO:0007669"/>
    <property type="project" value="TreeGrafter"/>
</dbReference>
<dbReference type="GO" id="GO:0004477">
    <property type="term" value="F:methenyltetrahydrofolate cyclohydrolase activity"/>
    <property type="evidence" value="ECO:0007669"/>
    <property type="project" value="UniProtKB-UniRule"/>
</dbReference>
<dbReference type="GO" id="GO:0004488">
    <property type="term" value="F:methylenetetrahydrofolate dehydrogenase (NADP+) activity"/>
    <property type="evidence" value="ECO:0007669"/>
    <property type="project" value="UniProtKB-UniRule"/>
</dbReference>
<dbReference type="GO" id="GO:0000105">
    <property type="term" value="P:L-histidine biosynthetic process"/>
    <property type="evidence" value="ECO:0007669"/>
    <property type="project" value="UniProtKB-KW"/>
</dbReference>
<dbReference type="GO" id="GO:0009086">
    <property type="term" value="P:methionine biosynthetic process"/>
    <property type="evidence" value="ECO:0007669"/>
    <property type="project" value="UniProtKB-KW"/>
</dbReference>
<dbReference type="GO" id="GO:0006164">
    <property type="term" value="P:purine nucleotide biosynthetic process"/>
    <property type="evidence" value="ECO:0007669"/>
    <property type="project" value="UniProtKB-KW"/>
</dbReference>
<dbReference type="GO" id="GO:0035999">
    <property type="term" value="P:tetrahydrofolate interconversion"/>
    <property type="evidence" value="ECO:0007669"/>
    <property type="project" value="UniProtKB-UniRule"/>
</dbReference>
<dbReference type="CDD" id="cd01080">
    <property type="entry name" value="NAD_bind_m-THF_DH_Cyclohyd"/>
    <property type="match status" value="1"/>
</dbReference>
<dbReference type="FunFam" id="3.40.50.720:FF:000094">
    <property type="entry name" value="Bifunctional protein FolD"/>
    <property type="match status" value="1"/>
</dbReference>
<dbReference type="FunFam" id="3.40.50.10860:FF:000005">
    <property type="entry name" value="C-1-tetrahydrofolate synthase, cytoplasmic, putative"/>
    <property type="match status" value="1"/>
</dbReference>
<dbReference type="Gene3D" id="3.40.50.10860">
    <property type="entry name" value="Leucine Dehydrogenase, chain A, domain 1"/>
    <property type="match status" value="1"/>
</dbReference>
<dbReference type="Gene3D" id="3.40.50.720">
    <property type="entry name" value="NAD(P)-binding Rossmann-like Domain"/>
    <property type="match status" value="1"/>
</dbReference>
<dbReference type="HAMAP" id="MF_01576">
    <property type="entry name" value="THF_DHG_CYH"/>
    <property type="match status" value="1"/>
</dbReference>
<dbReference type="InterPro" id="IPR046346">
    <property type="entry name" value="Aminoacid_DH-like_N_sf"/>
</dbReference>
<dbReference type="InterPro" id="IPR036291">
    <property type="entry name" value="NAD(P)-bd_dom_sf"/>
</dbReference>
<dbReference type="InterPro" id="IPR000672">
    <property type="entry name" value="THF_DH/CycHdrlase"/>
</dbReference>
<dbReference type="InterPro" id="IPR020630">
    <property type="entry name" value="THF_DH/CycHdrlase_cat_dom"/>
</dbReference>
<dbReference type="InterPro" id="IPR020631">
    <property type="entry name" value="THF_DH/CycHdrlase_NAD-bd_dom"/>
</dbReference>
<dbReference type="NCBIfam" id="NF010789">
    <property type="entry name" value="PRK14193.1"/>
    <property type="match status" value="1"/>
</dbReference>
<dbReference type="PANTHER" id="PTHR48099:SF5">
    <property type="entry name" value="C-1-TETRAHYDROFOLATE SYNTHASE, CYTOPLASMIC"/>
    <property type="match status" value="1"/>
</dbReference>
<dbReference type="PANTHER" id="PTHR48099">
    <property type="entry name" value="C-1-TETRAHYDROFOLATE SYNTHASE, CYTOPLASMIC-RELATED"/>
    <property type="match status" value="1"/>
</dbReference>
<dbReference type="Pfam" id="PF00763">
    <property type="entry name" value="THF_DHG_CYH"/>
    <property type="match status" value="1"/>
</dbReference>
<dbReference type="Pfam" id="PF02882">
    <property type="entry name" value="THF_DHG_CYH_C"/>
    <property type="match status" value="1"/>
</dbReference>
<dbReference type="PRINTS" id="PR00085">
    <property type="entry name" value="THFDHDRGNASE"/>
</dbReference>
<dbReference type="SUPFAM" id="SSF53223">
    <property type="entry name" value="Aminoacid dehydrogenase-like, N-terminal domain"/>
    <property type="match status" value="1"/>
</dbReference>
<dbReference type="SUPFAM" id="SSF51735">
    <property type="entry name" value="NAD(P)-binding Rossmann-fold domains"/>
    <property type="match status" value="1"/>
</dbReference>
<reference key="1">
    <citation type="journal article" date="2008" name="Genome Res.">
        <title>Insights from the complete genome sequence of Mycobacterium marinum on the evolution of Mycobacterium tuberculosis.</title>
        <authorList>
            <person name="Stinear T.P."/>
            <person name="Seemann T."/>
            <person name="Harrison P.F."/>
            <person name="Jenkin G.A."/>
            <person name="Davies J.K."/>
            <person name="Johnson P.D."/>
            <person name="Abdellah Z."/>
            <person name="Arrowsmith C."/>
            <person name="Chillingworth T."/>
            <person name="Churcher C."/>
            <person name="Clarke K."/>
            <person name="Cronin A."/>
            <person name="Davis P."/>
            <person name="Goodhead I."/>
            <person name="Holroyd N."/>
            <person name="Jagels K."/>
            <person name="Lord A."/>
            <person name="Moule S."/>
            <person name="Mungall K."/>
            <person name="Norbertczak H."/>
            <person name="Quail M.A."/>
            <person name="Rabbinowitsch E."/>
            <person name="Walker D."/>
            <person name="White B."/>
            <person name="Whitehead S."/>
            <person name="Small P.L."/>
            <person name="Brosch R."/>
            <person name="Ramakrishnan L."/>
            <person name="Fischbach M.A."/>
            <person name="Parkhill J."/>
            <person name="Cole S.T."/>
        </authorList>
    </citation>
    <scope>NUCLEOTIDE SEQUENCE [LARGE SCALE GENOMIC DNA]</scope>
    <source>
        <strain>ATCC BAA-535 / M</strain>
    </source>
</reference>
<feature type="chain" id="PRO_1000196794" description="Bifunctional protein FolD">
    <location>
        <begin position="1"/>
        <end position="281"/>
    </location>
</feature>
<feature type="binding site" evidence="1">
    <location>
        <begin position="165"/>
        <end position="167"/>
    </location>
    <ligand>
        <name>NADP(+)</name>
        <dbReference type="ChEBI" id="CHEBI:58349"/>
    </ligand>
</feature>
<feature type="binding site" evidence="1">
    <location>
        <position position="192"/>
    </location>
    <ligand>
        <name>NADP(+)</name>
        <dbReference type="ChEBI" id="CHEBI:58349"/>
    </ligand>
</feature>
<feature type="binding site" evidence="1">
    <location>
        <position position="233"/>
    </location>
    <ligand>
        <name>NADP(+)</name>
        <dbReference type="ChEBI" id="CHEBI:58349"/>
    </ligand>
</feature>
<protein>
    <recommendedName>
        <fullName evidence="1">Bifunctional protein FolD</fullName>
    </recommendedName>
    <domain>
        <recommendedName>
            <fullName evidence="1">Methylenetetrahydrofolate dehydrogenase</fullName>
            <ecNumber evidence="1">1.5.1.5</ecNumber>
        </recommendedName>
    </domain>
    <domain>
        <recommendedName>
            <fullName evidence="1">Methenyltetrahydrofolate cyclohydrolase</fullName>
            <ecNumber evidence="1">3.5.4.9</ecNumber>
        </recommendedName>
    </domain>
</protein>
<sequence length="281" mass="29727">MGAITLDGKATRDEIFVDLKQRVSELNASGRTPGLATILVGEDPGSQAYVRGKHSDCAKVGITSIRRDLPADISTATLNETIDELNANPDCTGYIVQLPLPKHLDENAALERIDPGKDADGLHPTNLGRLVLNTPAPLPCTPRGIVHLLRRYDVPIAGAHVVVIGRGVTVGRPLGLLLTRRSENATVTLCHTGTRDLPTLTRQADIIVAAVGVPHMLTADMVRPGAAVVDVGVSRVDGKLTGDVHPDVWEVAGHVSPNPGGVGPLTRAFLLTNVVELAEQR</sequence>
<accession>B2HDR8</accession>
<keyword id="KW-0028">Amino-acid biosynthesis</keyword>
<keyword id="KW-0368">Histidine biosynthesis</keyword>
<keyword id="KW-0378">Hydrolase</keyword>
<keyword id="KW-0486">Methionine biosynthesis</keyword>
<keyword id="KW-0511">Multifunctional enzyme</keyword>
<keyword id="KW-0521">NADP</keyword>
<keyword id="KW-0554">One-carbon metabolism</keyword>
<keyword id="KW-0560">Oxidoreductase</keyword>
<keyword id="KW-0658">Purine biosynthesis</keyword>
<keyword id="KW-1185">Reference proteome</keyword>
<gene>
    <name evidence="1" type="primary">folD</name>
    <name type="ordered locus">MMAR_1176</name>
</gene>